<dbReference type="EC" id="7.1.1.-" evidence="1"/>
<dbReference type="EMBL" id="CP000393">
    <property type="protein sequence ID" value="ABG52591.1"/>
    <property type="status" value="ALT_INIT"/>
    <property type="molecule type" value="Genomic_DNA"/>
</dbReference>
<dbReference type="SMR" id="Q10YT3"/>
<dbReference type="STRING" id="203124.Tery_3501"/>
<dbReference type="KEGG" id="ter:Tery_3501"/>
<dbReference type="eggNOG" id="COG0838">
    <property type="taxonomic scope" value="Bacteria"/>
</dbReference>
<dbReference type="HOGENOM" id="CLU_119549_1_1_3"/>
<dbReference type="GO" id="GO:0030964">
    <property type="term" value="C:NADH dehydrogenase complex"/>
    <property type="evidence" value="ECO:0007669"/>
    <property type="project" value="TreeGrafter"/>
</dbReference>
<dbReference type="GO" id="GO:0031676">
    <property type="term" value="C:plasma membrane-derived thylakoid membrane"/>
    <property type="evidence" value="ECO:0007669"/>
    <property type="project" value="UniProtKB-SubCell"/>
</dbReference>
<dbReference type="GO" id="GO:0008137">
    <property type="term" value="F:NADH dehydrogenase (ubiquinone) activity"/>
    <property type="evidence" value="ECO:0007669"/>
    <property type="project" value="InterPro"/>
</dbReference>
<dbReference type="GO" id="GO:0048038">
    <property type="term" value="F:quinone binding"/>
    <property type="evidence" value="ECO:0007669"/>
    <property type="project" value="UniProtKB-KW"/>
</dbReference>
<dbReference type="GO" id="GO:0019684">
    <property type="term" value="P:photosynthesis, light reaction"/>
    <property type="evidence" value="ECO:0007669"/>
    <property type="project" value="UniProtKB-UniRule"/>
</dbReference>
<dbReference type="FunFam" id="1.20.58.1610:FF:000001">
    <property type="entry name" value="NAD(P)H-quinone oxidoreductase subunit 3, chloroplastic"/>
    <property type="match status" value="1"/>
</dbReference>
<dbReference type="Gene3D" id="1.20.58.1610">
    <property type="entry name" value="NADH:ubiquinone/plastoquinone oxidoreductase, chain 3"/>
    <property type="match status" value="1"/>
</dbReference>
<dbReference type="HAMAP" id="MF_01394">
    <property type="entry name" value="NDH1_NuoA"/>
    <property type="match status" value="1"/>
</dbReference>
<dbReference type="InterPro" id="IPR023043">
    <property type="entry name" value="NAD(P)H_OxRDtase_bac/plastid"/>
</dbReference>
<dbReference type="InterPro" id="IPR000440">
    <property type="entry name" value="NADH_UbQ/plastoQ_OxRdtase_su3"/>
</dbReference>
<dbReference type="InterPro" id="IPR038430">
    <property type="entry name" value="NDAH_ubi_oxred_su3_sf"/>
</dbReference>
<dbReference type="PANTHER" id="PTHR11058">
    <property type="entry name" value="NADH-UBIQUINONE OXIDOREDUCTASE CHAIN 3"/>
    <property type="match status" value="1"/>
</dbReference>
<dbReference type="PANTHER" id="PTHR11058:SF9">
    <property type="entry name" value="NADH-UBIQUINONE OXIDOREDUCTASE CHAIN 3"/>
    <property type="match status" value="1"/>
</dbReference>
<dbReference type="Pfam" id="PF00507">
    <property type="entry name" value="Oxidored_q4"/>
    <property type="match status" value="1"/>
</dbReference>
<sequence length="135" mass="15735">MFNRESYLLRKYRLIVFFLSGYEYFLGFLMISSLVPIIALTASKLLRPKTRGPERRTTYESGVEPIGGAWIQFNIRYYMFALVFVIFDVETVFLYPWAVAFHQLGLLAFIEALIFIAILVVALVYAWRKGALEWS</sequence>
<protein>
    <recommendedName>
        <fullName evidence="1">NAD(P)H-quinone oxidoreductase subunit 3</fullName>
        <ecNumber evidence="1">7.1.1.-</ecNumber>
    </recommendedName>
    <alternativeName>
        <fullName evidence="1">NAD(P)H dehydrogenase subunit 3</fullName>
    </alternativeName>
    <alternativeName>
        <fullName evidence="1">NADH-plastoquinone oxidoreductase subunit 3</fullName>
    </alternativeName>
    <alternativeName>
        <fullName evidence="1">NDH-1 subunit 3</fullName>
        <shortName evidence="1">NDH-C</shortName>
    </alternativeName>
</protein>
<comment type="function">
    <text evidence="1">NDH-1 shuttles electrons from an unknown electron donor, via FMN and iron-sulfur (Fe-S) centers, to quinones in the respiratory and/or the photosynthetic chain. The immediate electron acceptor for the enzyme in this species is believed to be plastoquinone. Couples the redox reaction to proton translocation, and thus conserves the redox energy in a proton gradient. Cyanobacterial NDH-1 also plays a role in inorganic carbon-concentration.</text>
</comment>
<comment type="catalytic activity">
    <reaction evidence="1">
        <text>a plastoquinone + NADH + (n+1) H(+)(in) = a plastoquinol + NAD(+) + n H(+)(out)</text>
        <dbReference type="Rhea" id="RHEA:42608"/>
        <dbReference type="Rhea" id="RHEA-COMP:9561"/>
        <dbReference type="Rhea" id="RHEA-COMP:9562"/>
        <dbReference type="ChEBI" id="CHEBI:15378"/>
        <dbReference type="ChEBI" id="CHEBI:17757"/>
        <dbReference type="ChEBI" id="CHEBI:57540"/>
        <dbReference type="ChEBI" id="CHEBI:57945"/>
        <dbReference type="ChEBI" id="CHEBI:62192"/>
    </reaction>
</comment>
<comment type="catalytic activity">
    <reaction evidence="1">
        <text>a plastoquinone + NADPH + (n+1) H(+)(in) = a plastoquinol + NADP(+) + n H(+)(out)</text>
        <dbReference type="Rhea" id="RHEA:42612"/>
        <dbReference type="Rhea" id="RHEA-COMP:9561"/>
        <dbReference type="Rhea" id="RHEA-COMP:9562"/>
        <dbReference type="ChEBI" id="CHEBI:15378"/>
        <dbReference type="ChEBI" id="CHEBI:17757"/>
        <dbReference type="ChEBI" id="CHEBI:57783"/>
        <dbReference type="ChEBI" id="CHEBI:58349"/>
        <dbReference type="ChEBI" id="CHEBI:62192"/>
    </reaction>
</comment>
<comment type="subunit">
    <text evidence="1">NDH-1 can be composed of about 15 different subunits; different subcomplexes with different compositions have been identified which probably have different functions.</text>
</comment>
<comment type="subcellular location">
    <subcellularLocation>
        <location evidence="1">Cellular thylakoid membrane</location>
        <topology evidence="1">Multi-pass membrane protein</topology>
    </subcellularLocation>
</comment>
<comment type="similarity">
    <text evidence="1">Belongs to the complex I subunit 3 family.</text>
</comment>
<comment type="sequence caution" evidence="2">
    <conflict type="erroneous initiation">
        <sequence resource="EMBL-CDS" id="ABG52591"/>
    </conflict>
</comment>
<reference key="1">
    <citation type="journal article" date="2015" name="Proc. Natl. Acad. Sci. U.S.A.">
        <title>Trichodesmium genome maintains abundant, widespread noncoding DNA in situ, despite oligotrophic lifestyle.</title>
        <authorList>
            <person name="Walworth N."/>
            <person name="Pfreundt U."/>
            <person name="Nelson W.C."/>
            <person name="Mincer T."/>
            <person name="Heidelberg J.F."/>
            <person name="Fu F."/>
            <person name="Waterbury J.B."/>
            <person name="Glavina del Rio T."/>
            <person name="Goodwin L."/>
            <person name="Kyrpides N.C."/>
            <person name="Land M.L."/>
            <person name="Woyke T."/>
            <person name="Hutchins D.A."/>
            <person name="Hess W.R."/>
            <person name="Webb E.A."/>
        </authorList>
    </citation>
    <scope>NUCLEOTIDE SEQUENCE [LARGE SCALE GENOMIC DNA]</scope>
    <source>
        <strain>IMS101</strain>
    </source>
</reference>
<evidence type="ECO:0000255" key="1">
    <source>
        <dbReference type="HAMAP-Rule" id="MF_01394"/>
    </source>
</evidence>
<evidence type="ECO:0000305" key="2"/>
<proteinExistence type="inferred from homology"/>
<feature type="chain" id="PRO_0000362796" description="NAD(P)H-quinone oxidoreductase subunit 3">
    <location>
        <begin position="1"/>
        <end position="135"/>
    </location>
</feature>
<feature type="transmembrane region" description="Helical" evidence="1">
    <location>
        <begin position="15"/>
        <end position="35"/>
    </location>
</feature>
<feature type="transmembrane region" description="Helical" evidence="1">
    <location>
        <begin position="79"/>
        <end position="99"/>
    </location>
</feature>
<feature type="transmembrane region" description="Helical" evidence="1">
    <location>
        <begin position="104"/>
        <end position="124"/>
    </location>
</feature>
<accession>Q10YT3</accession>
<keyword id="KW-0472">Membrane</keyword>
<keyword id="KW-0520">NAD</keyword>
<keyword id="KW-0521">NADP</keyword>
<keyword id="KW-0618">Plastoquinone</keyword>
<keyword id="KW-0874">Quinone</keyword>
<keyword id="KW-0793">Thylakoid</keyword>
<keyword id="KW-1278">Translocase</keyword>
<keyword id="KW-0812">Transmembrane</keyword>
<keyword id="KW-1133">Transmembrane helix</keyword>
<keyword id="KW-0813">Transport</keyword>
<organism>
    <name type="scientific">Trichodesmium erythraeum (strain IMS101)</name>
    <dbReference type="NCBI Taxonomy" id="203124"/>
    <lineage>
        <taxon>Bacteria</taxon>
        <taxon>Bacillati</taxon>
        <taxon>Cyanobacteriota</taxon>
        <taxon>Cyanophyceae</taxon>
        <taxon>Oscillatoriophycideae</taxon>
        <taxon>Oscillatoriales</taxon>
        <taxon>Microcoleaceae</taxon>
        <taxon>Trichodesmium</taxon>
    </lineage>
</organism>
<name>NU3C_TRIEI</name>
<gene>
    <name evidence="1" type="primary">ndhC</name>
    <name type="ordered locus">Tery_3501</name>
</gene>